<accession>Q10LJ2</accession>
<accession>Q0DRY0</accession>
<reference key="1">
    <citation type="journal article" date="2005" name="Genome Res.">
        <title>Sequence, annotation, and analysis of synteny between rice chromosome 3 and diverged grass species.</title>
        <authorList>
            <consortium name="The rice chromosome 3 sequencing consortium"/>
            <person name="Buell C.R."/>
            <person name="Yuan Q."/>
            <person name="Ouyang S."/>
            <person name="Liu J."/>
            <person name="Zhu W."/>
            <person name="Wang A."/>
            <person name="Maiti R."/>
            <person name="Haas B."/>
            <person name="Wortman J."/>
            <person name="Pertea M."/>
            <person name="Jones K.M."/>
            <person name="Kim M."/>
            <person name="Overton L."/>
            <person name="Tsitrin T."/>
            <person name="Fadrosh D."/>
            <person name="Bera J."/>
            <person name="Weaver B."/>
            <person name="Jin S."/>
            <person name="Johri S."/>
            <person name="Reardon M."/>
            <person name="Webb K."/>
            <person name="Hill J."/>
            <person name="Moffat K."/>
            <person name="Tallon L."/>
            <person name="Van Aken S."/>
            <person name="Lewis M."/>
            <person name="Utterback T."/>
            <person name="Feldblyum T."/>
            <person name="Zismann V."/>
            <person name="Iobst S."/>
            <person name="Hsiao J."/>
            <person name="de Vazeille A.R."/>
            <person name="Salzberg S.L."/>
            <person name="White O."/>
            <person name="Fraser C.M."/>
            <person name="Yu Y."/>
            <person name="Kim H."/>
            <person name="Rambo T."/>
            <person name="Currie J."/>
            <person name="Collura K."/>
            <person name="Kernodle-Thompson S."/>
            <person name="Wei F."/>
            <person name="Kudrna K."/>
            <person name="Ammiraju J.S.S."/>
            <person name="Luo M."/>
            <person name="Goicoechea J.L."/>
            <person name="Wing R.A."/>
            <person name="Henry D."/>
            <person name="Oates R."/>
            <person name="Palmer M."/>
            <person name="Pries G."/>
            <person name="Saski C."/>
            <person name="Simmons J."/>
            <person name="Soderlund C."/>
            <person name="Nelson W."/>
            <person name="de la Bastide M."/>
            <person name="Spiegel L."/>
            <person name="Nascimento L."/>
            <person name="Huang E."/>
            <person name="Preston R."/>
            <person name="Zutavern T."/>
            <person name="Palmer L."/>
            <person name="O'Shaughnessy A."/>
            <person name="Dike S."/>
            <person name="McCombie W.R."/>
            <person name="Minx P."/>
            <person name="Cordum H."/>
            <person name="Wilson R."/>
            <person name="Jin W."/>
            <person name="Lee H.R."/>
            <person name="Jiang J."/>
            <person name="Jackson S."/>
        </authorList>
    </citation>
    <scope>NUCLEOTIDE SEQUENCE [LARGE SCALE GENOMIC DNA]</scope>
    <source>
        <strain>cv. Nipponbare</strain>
    </source>
</reference>
<reference key="2">
    <citation type="journal article" date="2005" name="Nature">
        <title>The map-based sequence of the rice genome.</title>
        <authorList>
            <consortium name="International rice genome sequencing project (IRGSP)"/>
        </authorList>
    </citation>
    <scope>NUCLEOTIDE SEQUENCE [LARGE SCALE GENOMIC DNA]</scope>
    <source>
        <strain>cv. Nipponbare</strain>
    </source>
</reference>
<reference key="3">
    <citation type="journal article" date="2008" name="Nucleic Acids Res.">
        <title>The rice annotation project database (RAP-DB): 2008 update.</title>
        <authorList>
            <consortium name="The rice annotation project (RAP)"/>
        </authorList>
    </citation>
    <scope>GENOME REANNOTATION</scope>
    <source>
        <strain>cv. Nipponbare</strain>
    </source>
</reference>
<reference key="4">
    <citation type="journal article" date="2013" name="Rice">
        <title>Improvement of the Oryza sativa Nipponbare reference genome using next generation sequence and optical map data.</title>
        <authorList>
            <person name="Kawahara Y."/>
            <person name="de la Bastide M."/>
            <person name="Hamilton J.P."/>
            <person name="Kanamori H."/>
            <person name="McCombie W.R."/>
            <person name="Ouyang S."/>
            <person name="Schwartz D.C."/>
            <person name="Tanaka T."/>
            <person name="Wu J."/>
            <person name="Zhou S."/>
            <person name="Childs K.L."/>
            <person name="Davidson R.M."/>
            <person name="Lin H."/>
            <person name="Quesada-Ocampo L."/>
            <person name="Vaillancourt B."/>
            <person name="Sakai H."/>
            <person name="Lee S.S."/>
            <person name="Kim J."/>
            <person name="Numa H."/>
            <person name="Itoh T."/>
            <person name="Buell C.R."/>
            <person name="Matsumoto T."/>
        </authorList>
    </citation>
    <scope>GENOME REANNOTATION</scope>
    <source>
        <strain>cv. Nipponbare</strain>
    </source>
</reference>
<reference key="5">
    <citation type="journal article" date="2005" name="PLoS Biol.">
        <title>The genomes of Oryza sativa: a history of duplications.</title>
        <authorList>
            <person name="Yu J."/>
            <person name="Wang J."/>
            <person name="Lin W."/>
            <person name="Li S."/>
            <person name="Li H."/>
            <person name="Zhou J."/>
            <person name="Ni P."/>
            <person name="Dong W."/>
            <person name="Hu S."/>
            <person name="Zeng C."/>
            <person name="Zhang J."/>
            <person name="Zhang Y."/>
            <person name="Li R."/>
            <person name="Xu Z."/>
            <person name="Li S."/>
            <person name="Li X."/>
            <person name="Zheng H."/>
            <person name="Cong L."/>
            <person name="Lin L."/>
            <person name="Yin J."/>
            <person name="Geng J."/>
            <person name="Li G."/>
            <person name="Shi J."/>
            <person name="Liu J."/>
            <person name="Lv H."/>
            <person name="Li J."/>
            <person name="Wang J."/>
            <person name="Deng Y."/>
            <person name="Ran L."/>
            <person name="Shi X."/>
            <person name="Wang X."/>
            <person name="Wu Q."/>
            <person name="Li C."/>
            <person name="Ren X."/>
            <person name="Wang J."/>
            <person name="Wang X."/>
            <person name="Li D."/>
            <person name="Liu D."/>
            <person name="Zhang X."/>
            <person name="Ji Z."/>
            <person name="Zhao W."/>
            <person name="Sun Y."/>
            <person name="Zhang Z."/>
            <person name="Bao J."/>
            <person name="Han Y."/>
            <person name="Dong L."/>
            <person name="Ji J."/>
            <person name="Chen P."/>
            <person name="Wu S."/>
            <person name="Liu J."/>
            <person name="Xiao Y."/>
            <person name="Bu D."/>
            <person name="Tan J."/>
            <person name="Yang L."/>
            <person name="Ye C."/>
            <person name="Zhang J."/>
            <person name="Xu J."/>
            <person name="Zhou Y."/>
            <person name="Yu Y."/>
            <person name="Zhang B."/>
            <person name="Zhuang S."/>
            <person name="Wei H."/>
            <person name="Liu B."/>
            <person name="Lei M."/>
            <person name="Yu H."/>
            <person name="Li Y."/>
            <person name="Xu H."/>
            <person name="Wei S."/>
            <person name="He X."/>
            <person name="Fang L."/>
            <person name="Zhang Z."/>
            <person name="Zhang Y."/>
            <person name="Huang X."/>
            <person name="Su Z."/>
            <person name="Tong W."/>
            <person name="Li J."/>
            <person name="Tong Z."/>
            <person name="Li S."/>
            <person name="Ye J."/>
            <person name="Wang L."/>
            <person name="Fang L."/>
            <person name="Lei T."/>
            <person name="Chen C.-S."/>
            <person name="Chen H.-C."/>
            <person name="Xu Z."/>
            <person name="Li H."/>
            <person name="Huang H."/>
            <person name="Zhang F."/>
            <person name="Xu H."/>
            <person name="Li N."/>
            <person name="Zhao C."/>
            <person name="Li S."/>
            <person name="Dong L."/>
            <person name="Huang Y."/>
            <person name="Li L."/>
            <person name="Xi Y."/>
            <person name="Qi Q."/>
            <person name="Li W."/>
            <person name="Zhang B."/>
            <person name="Hu W."/>
            <person name="Zhang Y."/>
            <person name="Tian X."/>
            <person name="Jiao Y."/>
            <person name="Liang X."/>
            <person name="Jin J."/>
            <person name="Gao L."/>
            <person name="Zheng W."/>
            <person name="Hao B."/>
            <person name="Liu S.-M."/>
            <person name="Wang W."/>
            <person name="Yuan L."/>
            <person name="Cao M."/>
            <person name="McDermott J."/>
            <person name="Samudrala R."/>
            <person name="Wang J."/>
            <person name="Wong G.K.-S."/>
            <person name="Yang H."/>
        </authorList>
    </citation>
    <scope>NUCLEOTIDE SEQUENCE [LARGE SCALE GENOMIC DNA]</scope>
    <source>
        <strain>cv. Nipponbare</strain>
    </source>
</reference>
<protein>
    <recommendedName>
        <fullName>Metal tolerance protein 2</fullName>
        <shortName>OsMTP2</shortName>
    </recommendedName>
</protein>
<sequence length="389" mass="40734">MGFRLAHLAACVARAAASSSRLRGPRPAASALVAPLLASPWEPSGGGQPHWLVPSRGHVGHSHHHHHGEEVGGEASERIFRLGLAADVVLTVGKAVTGYLSGSTAIAADAAHSLSDIVLSGVALLSYKAAKAPRDKEHPYGHGKFESLGALGISSMLLVTAGGIAWHAFDVLQGVMSSAPDIIGNVSHAHHSHGSSGHHHGIDLEHPILALSVTAFAISVKEGLYWITKRAGEKEGSGLMKANAWHHRSDAISSVVALLGVGGSILGVPYLDPLAGLVVSGMILKAGVHTGYESVLELVDAAVDPSLLQPIKETILQVDGVKGCHRLRGRKAGTSLYLDVHIEVYPFLSVSAAHDIGETVRHQIQKSHNQVAEVFIHIGSLQPLNQNAL</sequence>
<dbReference type="EMBL" id="DP000009">
    <property type="protein sequence ID" value="ABF95908.1"/>
    <property type="molecule type" value="Genomic_DNA"/>
</dbReference>
<dbReference type="EMBL" id="AP008209">
    <property type="protein sequence ID" value="BAF12008.2"/>
    <property type="status" value="ALT_SEQ"/>
    <property type="molecule type" value="Genomic_DNA"/>
</dbReference>
<dbReference type="EMBL" id="AP014959">
    <property type="status" value="NOT_ANNOTATED_CDS"/>
    <property type="molecule type" value="Genomic_DNA"/>
</dbReference>
<dbReference type="EMBL" id="CM000140">
    <property type="protein sequence ID" value="EAZ26895.1"/>
    <property type="molecule type" value="Genomic_DNA"/>
</dbReference>
<dbReference type="SMR" id="Q10LJ2"/>
<dbReference type="FunCoup" id="Q10LJ2">
    <property type="interactions" value="413"/>
</dbReference>
<dbReference type="STRING" id="39947.Q10LJ2"/>
<dbReference type="PaxDb" id="39947-Q10LJ2"/>
<dbReference type="KEGG" id="dosa:Os03g0346800"/>
<dbReference type="eggNOG" id="KOG1485">
    <property type="taxonomic scope" value="Eukaryota"/>
</dbReference>
<dbReference type="HOGENOM" id="CLU_013430_13_0_1"/>
<dbReference type="InParanoid" id="Q10LJ2"/>
<dbReference type="Proteomes" id="UP000000763">
    <property type="component" value="Chromosome 3"/>
</dbReference>
<dbReference type="Proteomes" id="UP000007752">
    <property type="component" value="Chromosome 3"/>
</dbReference>
<dbReference type="Proteomes" id="UP000059680">
    <property type="component" value="Chromosome 3"/>
</dbReference>
<dbReference type="GO" id="GO:0016020">
    <property type="term" value="C:membrane"/>
    <property type="evidence" value="ECO:0000318"/>
    <property type="project" value="GO_Central"/>
</dbReference>
<dbReference type="GO" id="GO:0005774">
    <property type="term" value="C:vacuolar membrane"/>
    <property type="evidence" value="ECO:0007669"/>
    <property type="project" value="UniProtKB-SubCell"/>
</dbReference>
<dbReference type="GO" id="GO:0008324">
    <property type="term" value="F:monoatomic cation transmembrane transporter activity"/>
    <property type="evidence" value="ECO:0000318"/>
    <property type="project" value="GO_Central"/>
</dbReference>
<dbReference type="FunFam" id="1.20.1510.10:FF:000023">
    <property type="entry name" value="Metal tolerance protein C1"/>
    <property type="match status" value="1"/>
</dbReference>
<dbReference type="FunFam" id="3.30.70.1350:FF:000008">
    <property type="entry name" value="Metal tolerance protein C1"/>
    <property type="match status" value="1"/>
</dbReference>
<dbReference type="Gene3D" id="1.20.1510.10">
    <property type="entry name" value="Cation efflux protein transmembrane domain"/>
    <property type="match status" value="1"/>
</dbReference>
<dbReference type="Gene3D" id="3.30.70.1350">
    <property type="entry name" value="Cation efflux protein, cytoplasmic domain"/>
    <property type="match status" value="1"/>
</dbReference>
<dbReference type="InterPro" id="IPR002524">
    <property type="entry name" value="Cation_efflux"/>
</dbReference>
<dbReference type="InterPro" id="IPR027470">
    <property type="entry name" value="Cation_efflux_CTD"/>
</dbReference>
<dbReference type="InterPro" id="IPR036837">
    <property type="entry name" value="Cation_efflux_CTD_sf"/>
</dbReference>
<dbReference type="InterPro" id="IPR027469">
    <property type="entry name" value="Cation_efflux_TMD_sf"/>
</dbReference>
<dbReference type="InterPro" id="IPR050291">
    <property type="entry name" value="CDF_Transporter"/>
</dbReference>
<dbReference type="NCBIfam" id="TIGR01297">
    <property type="entry name" value="CDF"/>
    <property type="match status" value="1"/>
</dbReference>
<dbReference type="PANTHER" id="PTHR43840">
    <property type="entry name" value="MITOCHONDRIAL METAL TRANSPORTER 1-RELATED"/>
    <property type="match status" value="1"/>
</dbReference>
<dbReference type="PANTHER" id="PTHR43840:SF15">
    <property type="entry name" value="MITOCHONDRIAL METAL TRANSPORTER 1-RELATED"/>
    <property type="match status" value="1"/>
</dbReference>
<dbReference type="Pfam" id="PF01545">
    <property type="entry name" value="Cation_efflux"/>
    <property type="match status" value="1"/>
</dbReference>
<dbReference type="Pfam" id="PF16916">
    <property type="entry name" value="ZT_dimer"/>
    <property type="match status" value="1"/>
</dbReference>
<dbReference type="SUPFAM" id="SSF160240">
    <property type="entry name" value="Cation efflux protein cytoplasmic domain-like"/>
    <property type="match status" value="1"/>
</dbReference>
<dbReference type="SUPFAM" id="SSF161111">
    <property type="entry name" value="Cation efflux protein transmembrane domain-like"/>
    <property type="match status" value="1"/>
</dbReference>
<gene>
    <name type="primary">MTP2</name>
    <name type="ordered locus">Os03g0346800</name>
    <name type="ordered locus">LOC_Os03g22550</name>
    <name type="ORF">OsJ_10821</name>
</gene>
<organism>
    <name type="scientific">Oryza sativa subsp. japonica</name>
    <name type="common">Rice</name>
    <dbReference type="NCBI Taxonomy" id="39947"/>
    <lineage>
        <taxon>Eukaryota</taxon>
        <taxon>Viridiplantae</taxon>
        <taxon>Streptophyta</taxon>
        <taxon>Embryophyta</taxon>
        <taxon>Tracheophyta</taxon>
        <taxon>Spermatophyta</taxon>
        <taxon>Magnoliopsida</taxon>
        <taxon>Liliopsida</taxon>
        <taxon>Poales</taxon>
        <taxon>Poaceae</taxon>
        <taxon>BOP clade</taxon>
        <taxon>Oryzoideae</taxon>
        <taxon>Oryzeae</taxon>
        <taxon>Oryzinae</taxon>
        <taxon>Oryza</taxon>
        <taxon>Oryza sativa</taxon>
    </lineage>
</organism>
<name>MTP2_ORYSJ</name>
<evidence type="ECO:0000250" key="1"/>
<evidence type="ECO:0000255" key="2"/>
<evidence type="ECO:0000305" key="3"/>
<keyword id="KW-0406">Ion transport</keyword>
<keyword id="KW-0472">Membrane</keyword>
<keyword id="KW-1185">Reference proteome</keyword>
<keyword id="KW-0812">Transmembrane</keyword>
<keyword id="KW-1133">Transmembrane helix</keyword>
<keyword id="KW-0813">Transport</keyword>
<keyword id="KW-0926">Vacuole</keyword>
<feature type="chain" id="PRO_0000400010" description="Metal tolerance protein 2">
    <location>
        <begin position="1"/>
        <end position="389"/>
    </location>
</feature>
<feature type="topological domain" description="Cytoplasmic" evidence="2">
    <location>
        <begin position="1"/>
        <end position="81"/>
    </location>
</feature>
<feature type="transmembrane region" description="Helical" evidence="2">
    <location>
        <begin position="82"/>
        <end position="102"/>
    </location>
</feature>
<feature type="topological domain" description="Vacuolar" evidence="2">
    <location>
        <begin position="103"/>
        <end position="104"/>
    </location>
</feature>
<feature type="transmembrane region" description="Helical" evidence="2">
    <location>
        <begin position="105"/>
        <end position="125"/>
    </location>
</feature>
<feature type="topological domain" description="Cytoplasmic" evidence="2">
    <location>
        <begin position="126"/>
        <end position="148"/>
    </location>
</feature>
<feature type="transmembrane region" description="Helical" evidence="2">
    <location>
        <begin position="149"/>
        <end position="169"/>
    </location>
</feature>
<feature type="topological domain" description="Vacuolar" evidence="2">
    <location>
        <begin position="170"/>
        <end position="206"/>
    </location>
</feature>
<feature type="transmembrane region" description="Helical" evidence="2">
    <location>
        <begin position="207"/>
        <end position="227"/>
    </location>
</feature>
<feature type="topological domain" description="Cytoplasmic" evidence="2">
    <location>
        <begin position="228"/>
        <end position="250"/>
    </location>
</feature>
<feature type="transmembrane region" description="Helical" evidence="2">
    <location>
        <begin position="251"/>
        <end position="271"/>
    </location>
</feature>
<feature type="topological domain" description="Vacuolar" evidence="2">
    <location>
        <begin position="272"/>
        <end position="275"/>
    </location>
</feature>
<feature type="transmembrane region" description="Helical" evidence="2">
    <location>
        <begin position="276"/>
        <end position="296"/>
    </location>
</feature>
<feature type="topological domain" description="Cytoplasmic" evidence="2">
    <location>
        <begin position="297"/>
        <end position="389"/>
    </location>
</feature>
<proteinExistence type="evidence at transcript level"/>
<comment type="function">
    <text evidence="1">Involved in sequestration of excess metal in the cytoplasm into vacuoles to maintain metal homeostasis.</text>
</comment>
<comment type="subcellular location">
    <subcellularLocation>
        <location evidence="1">Vacuole membrane</location>
        <topology evidence="1">Multi-pass membrane protein</topology>
    </subcellularLocation>
    <text>Tonoplast.</text>
</comment>
<comment type="similarity">
    <text evidence="3">Belongs to the cation diffusion facilitator (CDF) transporter (TC 2.A.4) family. SLC30A subfamily.</text>
</comment>
<comment type="sequence caution" evidence="3">
    <conflict type="erroneous gene model prediction">
        <sequence resource="EMBL-CDS" id="BAF12008"/>
    </conflict>
</comment>